<feature type="chain" id="PRO_0000113533" description="Serine hydroxymethyltransferase">
    <location>
        <begin position="1"/>
        <end position="426"/>
    </location>
</feature>
<feature type="binding site" evidence="1">
    <location>
        <position position="113"/>
    </location>
    <ligand>
        <name>(6S)-5,6,7,8-tetrahydrofolate</name>
        <dbReference type="ChEBI" id="CHEBI:57453"/>
    </ligand>
</feature>
<feature type="binding site" evidence="1">
    <location>
        <begin position="117"/>
        <end position="119"/>
    </location>
    <ligand>
        <name>(6S)-5,6,7,8-tetrahydrofolate</name>
        <dbReference type="ChEBI" id="CHEBI:57453"/>
    </ligand>
</feature>
<feature type="binding site" evidence="1">
    <location>
        <begin position="363"/>
        <end position="365"/>
    </location>
    <ligand>
        <name>(6S)-5,6,7,8-tetrahydrofolate</name>
        <dbReference type="ChEBI" id="CHEBI:57453"/>
    </ligand>
</feature>
<feature type="site" description="Plays an important role in substrate specificity" evidence="1">
    <location>
        <position position="221"/>
    </location>
</feature>
<feature type="modified residue" description="N6-(pyridoxal phosphate)lysine" evidence="1">
    <location>
        <position position="222"/>
    </location>
</feature>
<evidence type="ECO:0000255" key="1">
    <source>
        <dbReference type="HAMAP-Rule" id="MF_00051"/>
    </source>
</evidence>
<dbReference type="EC" id="2.1.2.1" evidence="1"/>
<dbReference type="EMBL" id="AE015928">
    <property type="protein sequence ID" value="AAO75845.1"/>
    <property type="molecule type" value="Genomic_DNA"/>
</dbReference>
<dbReference type="RefSeq" id="NP_809651.1">
    <property type="nucleotide sequence ID" value="NC_004663.1"/>
</dbReference>
<dbReference type="RefSeq" id="WP_011107424.1">
    <property type="nucleotide sequence ID" value="NC_004663.1"/>
</dbReference>
<dbReference type="SMR" id="Q8A9S7"/>
<dbReference type="FunCoup" id="Q8A9S7">
    <property type="interactions" value="542"/>
</dbReference>
<dbReference type="STRING" id="226186.BT_0738"/>
<dbReference type="PaxDb" id="226186-BT_0738"/>
<dbReference type="EnsemblBacteria" id="AAO75845">
    <property type="protein sequence ID" value="AAO75845"/>
    <property type="gene ID" value="BT_0738"/>
</dbReference>
<dbReference type="GeneID" id="60926706"/>
<dbReference type="KEGG" id="bth:BT_0738"/>
<dbReference type="PATRIC" id="fig|226186.12.peg.753"/>
<dbReference type="eggNOG" id="COG0112">
    <property type="taxonomic scope" value="Bacteria"/>
</dbReference>
<dbReference type="HOGENOM" id="CLU_022477_2_1_10"/>
<dbReference type="InParanoid" id="Q8A9S7"/>
<dbReference type="OrthoDB" id="9803846at2"/>
<dbReference type="UniPathway" id="UPA00193"/>
<dbReference type="UniPathway" id="UPA00288">
    <property type="reaction ID" value="UER01023"/>
</dbReference>
<dbReference type="Proteomes" id="UP000001414">
    <property type="component" value="Chromosome"/>
</dbReference>
<dbReference type="GO" id="GO:0005737">
    <property type="term" value="C:cytoplasm"/>
    <property type="evidence" value="ECO:0000318"/>
    <property type="project" value="GO_Central"/>
</dbReference>
<dbReference type="GO" id="GO:0005829">
    <property type="term" value="C:cytosol"/>
    <property type="evidence" value="ECO:0000318"/>
    <property type="project" value="GO_Central"/>
</dbReference>
<dbReference type="GO" id="GO:0004372">
    <property type="term" value="F:glycine hydroxymethyltransferase activity"/>
    <property type="evidence" value="ECO:0000318"/>
    <property type="project" value="GO_Central"/>
</dbReference>
<dbReference type="GO" id="GO:0030170">
    <property type="term" value="F:pyridoxal phosphate binding"/>
    <property type="evidence" value="ECO:0000318"/>
    <property type="project" value="GO_Central"/>
</dbReference>
<dbReference type="GO" id="GO:0019264">
    <property type="term" value="P:glycine biosynthetic process from serine"/>
    <property type="evidence" value="ECO:0000318"/>
    <property type="project" value="GO_Central"/>
</dbReference>
<dbReference type="GO" id="GO:0035999">
    <property type="term" value="P:tetrahydrofolate interconversion"/>
    <property type="evidence" value="ECO:0007669"/>
    <property type="project" value="UniProtKB-UniRule"/>
</dbReference>
<dbReference type="GO" id="GO:0046653">
    <property type="term" value="P:tetrahydrofolate metabolic process"/>
    <property type="evidence" value="ECO:0000318"/>
    <property type="project" value="GO_Central"/>
</dbReference>
<dbReference type="CDD" id="cd00378">
    <property type="entry name" value="SHMT"/>
    <property type="match status" value="1"/>
</dbReference>
<dbReference type="FunFam" id="3.40.640.10:FF:000001">
    <property type="entry name" value="Serine hydroxymethyltransferase"/>
    <property type="match status" value="1"/>
</dbReference>
<dbReference type="Gene3D" id="3.90.1150.10">
    <property type="entry name" value="Aspartate Aminotransferase, domain 1"/>
    <property type="match status" value="1"/>
</dbReference>
<dbReference type="Gene3D" id="3.40.640.10">
    <property type="entry name" value="Type I PLP-dependent aspartate aminotransferase-like (Major domain)"/>
    <property type="match status" value="1"/>
</dbReference>
<dbReference type="HAMAP" id="MF_00051">
    <property type="entry name" value="SHMT"/>
    <property type="match status" value="1"/>
</dbReference>
<dbReference type="InterPro" id="IPR015424">
    <property type="entry name" value="PyrdxlP-dep_Trfase"/>
</dbReference>
<dbReference type="InterPro" id="IPR015421">
    <property type="entry name" value="PyrdxlP-dep_Trfase_major"/>
</dbReference>
<dbReference type="InterPro" id="IPR015422">
    <property type="entry name" value="PyrdxlP-dep_Trfase_small"/>
</dbReference>
<dbReference type="InterPro" id="IPR001085">
    <property type="entry name" value="Ser_HO-MeTrfase"/>
</dbReference>
<dbReference type="InterPro" id="IPR049943">
    <property type="entry name" value="Ser_HO-MeTrfase-like"/>
</dbReference>
<dbReference type="InterPro" id="IPR019798">
    <property type="entry name" value="Ser_HO-MeTrfase_PLP_BS"/>
</dbReference>
<dbReference type="InterPro" id="IPR039429">
    <property type="entry name" value="SHMT-like_dom"/>
</dbReference>
<dbReference type="NCBIfam" id="NF000586">
    <property type="entry name" value="PRK00011.1"/>
    <property type="match status" value="1"/>
</dbReference>
<dbReference type="PANTHER" id="PTHR11680">
    <property type="entry name" value="SERINE HYDROXYMETHYLTRANSFERASE"/>
    <property type="match status" value="1"/>
</dbReference>
<dbReference type="PANTHER" id="PTHR11680:SF35">
    <property type="entry name" value="SERINE HYDROXYMETHYLTRANSFERASE 1"/>
    <property type="match status" value="1"/>
</dbReference>
<dbReference type="Pfam" id="PF00464">
    <property type="entry name" value="SHMT"/>
    <property type="match status" value="1"/>
</dbReference>
<dbReference type="PIRSF" id="PIRSF000412">
    <property type="entry name" value="SHMT"/>
    <property type="match status" value="1"/>
</dbReference>
<dbReference type="SUPFAM" id="SSF53383">
    <property type="entry name" value="PLP-dependent transferases"/>
    <property type="match status" value="1"/>
</dbReference>
<dbReference type="PROSITE" id="PS00096">
    <property type="entry name" value="SHMT"/>
    <property type="match status" value="1"/>
</dbReference>
<comment type="function">
    <text evidence="1">Catalyzes the reversible interconversion of serine and glycine with tetrahydrofolate (THF) serving as the one-carbon carrier. This reaction serves as the major source of one-carbon groups required for the biosynthesis of purines, thymidylate, methionine, and other important biomolecules. Also exhibits THF-independent aldolase activity toward beta-hydroxyamino acids, producing glycine and aldehydes, via a retro-aldol mechanism.</text>
</comment>
<comment type="catalytic activity">
    <reaction evidence="1">
        <text>(6R)-5,10-methylene-5,6,7,8-tetrahydrofolate + glycine + H2O = (6S)-5,6,7,8-tetrahydrofolate + L-serine</text>
        <dbReference type="Rhea" id="RHEA:15481"/>
        <dbReference type="ChEBI" id="CHEBI:15377"/>
        <dbReference type="ChEBI" id="CHEBI:15636"/>
        <dbReference type="ChEBI" id="CHEBI:33384"/>
        <dbReference type="ChEBI" id="CHEBI:57305"/>
        <dbReference type="ChEBI" id="CHEBI:57453"/>
        <dbReference type="EC" id="2.1.2.1"/>
    </reaction>
</comment>
<comment type="cofactor">
    <cofactor evidence="1">
        <name>pyridoxal 5'-phosphate</name>
        <dbReference type="ChEBI" id="CHEBI:597326"/>
    </cofactor>
</comment>
<comment type="pathway">
    <text evidence="1">One-carbon metabolism; tetrahydrofolate interconversion.</text>
</comment>
<comment type="pathway">
    <text evidence="1">Amino-acid biosynthesis; glycine biosynthesis; glycine from L-serine: step 1/1.</text>
</comment>
<comment type="subunit">
    <text evidence="1">Homodimer.</text>
</comment>
<comment type="subcellular location">
    <subcellularLocation>
        <location evidence="1">Cytoplasm</location>
    </subcellularLocation>
</comment>
<comment type="similarity">
    <text evidence="1">Belongs to the SHMT family.</text>
</comment>
<organism>
    <name type="scientific">Bacteroides thetaiotaomicron (strain ATCC 29148 / DSM 2079 / JCM 5827 / CCUG 10774 / NCTC 10582 / VPI-5482 / E50)</name>
    <dbReference type="NCBI Taxonomy" id="226186"/>
    <lineage>
        <taxon>Bacteria</taxon>
        <taxon>Pseudomonadati</taxon>
        <taxon>Bacteroidota</taxon>
        <taxon>Bacteroidia</taxon>
        <taxon>Bacteroidales</taxon>
        <taxon>Bacteroidaceae</taxon>
        <taxon>Bacteroides</taxon>
    </lineage>
</organism>
<reference key="1">
    <citation type="journal article" date="2003" name="Science">
        <title>A genomic view of the human-Bacteroides thetaiotaomicron symbiosis.</title>
        <authorList>
            <person name="Xu J."/>
            <person name="Bjursell M.K."/>
            <person name="Himrod J."/>
            <person name="Deng S."/>
            <person name="Carmichael L.K."/>
            <person name="Chiang H.C."/>
            <person name="Hooper L.V."/>
            <person name="Gordon J.I."/>
        </authorList>
    </citation>
    <scope>NUCLEOTIDE SEQUENCE [LARGE SCALE GENOMIC DNA]</scope>
    <source>
        <strain>ATCC 29148 / DSM 2079 / JCM 5827 / CCUG 10774 / NCTC 10582 / VPI-5482 / E50</strain>
    </source>
</reference>
<protein>
    <recommendedName>
        <fullName evidence="1">Serine hydroxymethyltransferase</fullName>
        <shortName evidence="1">SHMT</shortName>
        <shortName evidence="1">Serine methylase</shortName>
        <ecNumber evidence="1">2.1.2.1</ecNumber>
    </recommendedName>
</protein>
<keyword id="KW-0028">Amino-acid biosynthesis</keyword>
<keyword id="KW-0963">Cytoplasm</keyword>
<keyword id="KW-0554">One-carbon metabolism</keyword>
<keyword id="KW-0663">Pyridoxal phosphate</keyword>
<keyword id="KW-1185">Reference proteome</keyword>
<keyword id="KW-0808">Transferase</keyword>
<gene>
    <name evidence="1" type="primary">glyA</name>
    <name type="ordered locus">BT_0738</name>
</gene>
<accession>Q8A9S7</accession>
<proteinExistence type="inferred from homology"/>
<sequence length="426" mass="46776">MKRDDLIFDIIEKEHQRQLKGIELIASENFVSDQVMQAMGSCLTNKYAEGYPGKRYYGGCEVVDQSEQIAIDRLKEIFGAEWANVQPHSGAQANAAVFLAVLNPGDKFMGLNLAHGGHLSHGSLVNTSGIIYTPCEYNLNQETGRVDYDQMEEVALREKPKMIIGGGSAYSREWDYKRMREIADKVGAILMIDMAHPAGLIAAGLLENPVKYAHIVTSTTHKTLRGPRGGVIMMGKDFPNPWGKKTPKGEIKMMSQLLDSAVFPGVQGGPLEHVIAAKAVAFGEILQPEYKEYAKQVQKNAAILAQALIDRGFTIVSGGTDNHSMLVDLRSKYPDLTGKVAEKALVSADITVNKNMVPFDSRSAFQTSGIRLGTPAITTRGAKEDLMIEIAEMIETVLSNVENEEVIAQVRARVNETMKKYPLFAD</sequence>
<name>GLYA_BACTN</name>